<evidence type="ECO:0000250" key="1"/>
<evidence type="ECO:0000255" key="2">
    <source>
        <dbReference type="PROSITE-ProRule" id="PRU00214"/>
    </source>
</evidence>
<evidence type="ECO:0000305" key="3"/>
<proteinExistence type="evidence at protein level"/>
<reference key="1">
    <citation type="journal article" date="1989" name="Biochemistry">
        <title>Molecular organization of developmentally regulated Dictyostelium discoideum ubiquitin cDNAs.</title>
        <authorList>
            <person name="Ohmachi T."/>
            <person name="Giorda R."/>
            <person name="Shaw D.R."/>
            <person name="Ennis H.L."/>
        </authorList>
    </citation>
    <scope>NUCLEOTIDE SEQUENCE [MRNA]</scope>
</reference>
<reference key="2">
    <citation type="journal article" date="1987" name="Mol. Cell. Biol.">
        <title>Structure of two developmentally regulated Dictyostelium discoideum ubiquitin genes.</title>
        <authorList>
            <person name="Giorda R."/>
            <person name="Ennis H.L."/>
        </authorList>
    </citation>
    <scope>NUCLEOTIDE SEQUENCE [GENOMIC DNA]</scope>
</reference>
<reference key="3">
    <citation type="journal article" date="2005" name="Nature">
        <title>The genome of the social amoeba Dictyostelium discoideum.</title>
        <authorList>
            <person name="Eichinger L."/>
            <person name="Pachebat J.A."/>
            <person name="Gloeckner G."/>
            <person name="Rajandream M.A."/>
            <person name="Sucgang R."/>
            <person name="Berriman M."/>
            <person name="Song J."/>
            <person name="Olsen R."/>
            <person name="Szafranski K."/>
            <person name="Xu Q."/>
            <person name="Tunggal B."/>
            <person name="Kummerfeld S."/>
            <person name="Madera M."/>
            <person name="Konfortov B.A."/>
            <person name="Rivero F."/>
            <person name="Bankier A.T."/>
            <person name="Lehmann R."/>
            <person name="Hamlin N."/>
            <person name="Davies R."/>
            <person name="Gaudet P."/>
            <person name="Fey P."/>
            <person name="Pilcher K."/>
            <person name="Chen G."/>
            <person name="Saunders D."/>
            <person name="Sodergren E.J."/>
            <person name="Davis P."/>
            <person name="Kerhornou A."/>
            <person name="Nie X."/>
            <person name="Hall N."/>
            <person name="Anjard C."/>
            <person name="Hemphill L."/>
            <person name="Bason N."/>
            <person name="Farbrother P."/>
            <person name="Desany B."/>
            <person name="Just E."/>
            <person name="Morio T."/>
            <person name="Rost R."/>
            <person name="Churcher C.M."/>
            <person name="Cooper J."/>
            <person name="Haydock S."/>
            <person name="van Driessche N."/>
            <person name="Cronin A."/>
            <person name="Goodhead I."/>
            <person name="Muzny D.M."/>
            <person name="Mourier T."/>
            <person name="Pain A."/>
            <person name="Lu M."/>
            <person name="Harper D."/>
            <person name="Lindsay R."/>
            <person name="Hauser H."/>
            <person name="James K.D."/>
            <person name="Quiles M."/>
            <person name="Madan Babu M."/>
            <person name="Saito T."/>
            <person name="Buchrieser C."/>
            <person name="Wardroper A."/>
            <person name="Felder M."/>
            <person name="Thangavelu M."/>
            <person name="Johnson D."/>
            <person name="Knights A."/>
            <person name="Loulseged H."/>
            <person name="Mungall K.L."/>
            <person name="Oliver K."/>
            <person name="Price C."/>
            <person name="Quail M.A."/>
            <person name="Urushihara H."/>
            <person name="Hernandez J."/>
            <person name="Rabbinowitsch E."/>
            <person name="Steffen D."/>
            <person name="Sanders M."/>
            <person name="Ma J."/>
            <person name="Kohara Y."/>
            <person name="Sharp S."/>
            <person name="Simmonds M.N."/>
            <person name="Spiegler S."/>
            <person name="Tivey A."/>
            <person name="Sugano S."/>
            <person name="White B."/>
            <person name="Walker D."/>
            <person name="Woodward J.R."/>
            <person name="Winckler T."/>
            <person name="Tanaka Y."/>
            <person name="Shaulsky G."/>
            <person name="Schleicher M."/>
            <person name="Weinstock G.M."/>
            <person name="Rosenthal A."/>
            <person name="Cox E.C."/>
            <person name="Chisholm R.L."/>
            <person name="Gibbs R.A."/>
            <person name="Loomis W.F."/>
            <person name="Platzer M."/>
            <person name="Kay R.R."/>
            <person name="Williams J.G."/>
            <person name="Dear P.H."/>
            <person name="Noegel A.A."/>
            <person name="Barrell B.G."/>
            <person name="Kuspa A."/>
        </authorList>
    </citation>
    <scope>NUCLEOTIDE SEQUENCE [LARGE SCALE GENOMIC DNA]</scope>
    <source>
        <strain>AX4</strain>
    </source>
</reference>
<reference key="4">
    <citation type="journal article" date="2006" name="J. Proteome Res.">
        <title>Identification of novel centrosomal proteins in Dictyostelium discoideum by comparative proteomic approaches.</title>
        <authorList>
            <person name="Reinders Y."/>
            <person name="Schulz I."/>
            <person name="Graef R."/>
            <person name="Sickmann A."/>
        </authorList>
    </citation>
    <scope>IDENTIFICATION BY MASS SPECTROMETRY [LARGE SCALE ANALYSIS]</scope>
</reference>
<organism>
    <name type="scientific">Dictyostelium discoideum</name>
    <name type="common">Social amoeba</name>
    <dbReference type="NCBI Taxonomy" id="44689"/>
    <lineage>
        <taxon>Eukaryota</taxon>
        <taxon>Amoebozoa</taxon>
        <taxon>Evosea</taxon>
        <taxon>Eumycetozoa</taxon>
        <taxon>Dictyostelia</taxon>
        <taxon>Dictyosteliales</taxon>
        <taxon>Dictyosteliaceae</taxon>
        <taxon>Dictyostelium</taxon>
    </lineage>
</organism>
<comment type="function">
    <text evidence="1">Ubiquitin exists either covalently attached to another protein, or free (unanchored). When covalently bound, it is conjugated to target proteins via an isopeptide bond either as a monomer (monoubiquitin), a polymer linked via different Lys residues of the ubiquitin (polyubiquitin chains) or a linear polymer linked via the initiator Met of the ubiquitin (linear polyubiquitin chains). Polyubiquitin chains, when attached to a target protein, have different functions depending on the Lys residue of the ubiquitin that is linked: Lys-48-linked is involved in protein degradation via the proteasome. Linear polymer chains formed via attachment by the initiator Met lead to cell signaling. Ubiquitin is usually conjugated to Lys residues of target proteins, however, in rare cases, conjugation to Cys or Ser residues has been observed. When polyubiquitin is free (unanchored-polyubiquitin), it also has distinct roles, such as in activation of protein kinases, and in signaling (By similarity).</text>
</comment>
<comment type="subcellular location">
    <subcellularLocation>
        <location evidence="1">Cytoplasm</location>
    </subcellularLocation>
    <subcellularLocation>
        <location evidence="1">Nucleus</location>
    </subcellularLocation>
</comment>
<comment type="miscellaneous">
    <text>Ubiquitin is synthesized as a polyubiquitin precursor with exact head to tail repeats. Some ubiquitin genes contain a single copy of ubiquitin fused to a ribosomal protein. In D.discoideum there are 9 genes: ubqA: 5 copies of Ub and a final Asn; ubqB: 1 copy of Ub and ribosomal protein eL40; ubqC: 1 copy of Ub and ribosomal protein eS31; ubqD: 3 copies of Ub and a final Leu; ubqF: 7 copies of Ub and a final Asn; ubqG: 5 copies of Ub and a final Leu; ubqH: 5 copies of Ub and a final Asn; ubqI: 4 copies of Ub and a final Asn; ubqJ: 4 copies of Ub and a final Asn.</text>
</comment>
<comment type="miscellaneous">
    <text>For the sake of clarity sequence features are annotated only for the first chain, and are not repeated for each of the following chains.</text>
</comment>
<comment type="similarity">
    <text evidence="3">Belongs to the ubiquitin family.</text>
</comment>
<feature type="chain" id="PRO_0000114822" description="Ubiquitin">
    <location>
        <begin position="1"/>
        <end position="76"/>
    </location>
</feature>
<feature type="chain" id="PRO_0000396312" description="Ubiquitin-related 1">
    <location>
        <begin position="77"/>
        <end position="152"/>
    </location>
</feature>
<feature type="chain" id="PRO_0000396313" description="Ubiquitin-related 1">
    <location>
        <begin position="153"/>
        <end position="228"/>
    </location>
</feature>
<feature type="chain" id="PRO_0000396314" description="Ubiquitin">
    <location>
        <begin position="229"/>
        <end position="304"/>
    </location>
</feature>
<feature type="chain" id="PRO_0000396315" description="Ubiquitin-related 1">
    <location>
        <begin position="305"/>
        <end position="380"/>
    </location>
</feature>
<feature type="propeptide" id="PRO_0000396316">
    <location>
        <position position="381"/>
    </location>
</feature>
<feature type="domain" description="Ubiquitin-like 1" evidence="2">
    <location>
        <begin position="1"/>
        <end position="76"/>
    </location>
</feature>
<feature type="domain" description="Ubiquitin-like 2" evidence="2">
    <location>
        <begin position="77"/>
        <end position="152"/>
    </location>
</feature>
<feature type="domain" description="Ubiquitin-like 3" evidence="2">
    <location>
        <begin position="153"/>
        <end position="228"/>
    </location>
</feature>
<feature type="domain" description="Ubiquitin-like 4" evidence="2">
    <location>
        <begin position="229"/>
        <end position="304"/>
    </location>
</feature>
<feature type="domain" description="Ubiquitin-like 5" evidence="2">
    <location>
        <begin position="305"/>
        <end position="380"/>
    </location>
</feature>
<feature type="cross-link" description="Glycyl lysine isopeptide (Lys-Gly) (interchain with G-Cter in ubiquitin)" evidence="1">
    <location>
        <position position="48"/>
    </location>
</feature>
<feature type="cross-link" description="Glycyl lysine isopeptide (Gly-Lys) (interchain with K-? in acceptor proteins)" evidence="2">
    <location>
        <position position="76"/>
    </location>
</feature>
<feature type="sequence conflict" description="In Ref. 2; AAA33261." evidence="3" ref="2">
    <original>S</original>
    <variation>F</variation>
    <location>
        <position position="361"/>
    </location>
</feature>
<gene>
    <name type="primary">ubqA</name>
    <name type="ORF">DDB_G0282295</name>
</gene>
<accession>P0CG76</accession>
<accession>P08618</accession>
<accession>Q54HH5</accession>
<accession>Q54L38</accession>
<accession>Q54SE1</accession>
<accession>Q54SP3</accession>
<accession>Q54UW7</accession>
<accession>Q54WJ3</accession>
<accession>Q550W7</accession>
<accession>Q55DZ5</accession>
<accession>Q86KQ4</accession>
<keyword id="KW-0963">Cytoplasm</keyword>
<keyword id="KW-1017">Isopeptide bond</keyword>
<keyword id="KW-0539">Nucleus</keyword>
<keyword id="KW-1185">Reference proteome</keyword>
<keyword id="KW-0677">Repeat</keyword>
<keyword id="KW-0832">Ubl conjugation</keyword>
<name>UBIQA_DICDI</name>
<sequence length="381" mass="42821">MQIFVKTLTGKTITLEVEGSDNIENVKAKIQDKEGIPPDQQRLIFAGKQLEDGRTLSDYNIQKESTLHLVLRLRGGMQIFVKTLTGKTITLEVEGSDNIENVKTKIQDKEGIPPDQQRLIFAGKQLEDGRTLSDYNIQKESTLHLVLRLRGGMQIFVKTLTGKTITLEVEGSDNIENVKTKIQDKEGIPPDQQRLIFAGKQLEDGRTLSDYNIQKESTLHLVLRLRGGMQIFVKTLTGKTITLEVEGSDNIENVKAKIQDKEGIPPDQQRLIFAGKQLEDGRTLSDYNIQKESTLHLVLRLRGGMQIFVKTLTGKTITLEVEGSDNIENVKTKIQDKEGIPPDQQRLIFAGKQLEDGRTLSDYNIQKESTLHLVLRLRGGN</sequence>
<dbReference type="EMBL" id="M23748">
    <property type="protein sequence ID" value="AAA33262.1"/>
    <property type="molecule type" value="mRNA"/>
</dbReference>
<dbReference type="EMBL" id="M19666">
    <property type="protein sequence ID" value="AAA33261.1"/>
    <property type="molecule type" value="Genomic_DNA"/>
</dbReference>
<dbReference type="EMBL" id="M19491">
    <property type="protein sequence ID" value="AAA33269.1"/>
    <property type="molecule type" value="Genomic_DNA"/>
</dbReference>
<dbReference type="EMBL" id="AAFI02000047">
    <property type="protein sequence ID" value="EAL66269.1"/>
    <property type="molecule type" value="Genomic_DNA"/>
</dbReference>
<dbReference type="PIR" id="A27806">
    <property type="entry name" value="A27806"/>
</dbReference>
<dbReference type="PIR" id="B34080">
    <property type="entry name" value="B34080"/>
</dbReference>
<dbReference type="RefSeq" id="XP_640258.1">
    <property type="nucleotide sequence ID" value="XM_635166.1"/>
</dbReference>
<dbReference type="SMR" id="P0CG76"/>
<dbReference type="BioGRID" id="1248520">
    <property type="interactions" value="1"/>
</dbReference>
<dbReference type="FunCoup" id="P0CG76">
    <property type="interactions" value="306"/>
</dbReference>
<dbReference type="STRING" id="44689.P0CG76"/>
<dbReference type="PaxDb" id="44689-DDB0214921"/>
<dbReference type="EnsemblProtists" id="EAL66269">
    <property type="protein sequence ID" value="EAL66269"/>
    <property type="gene ID" value="DDB_G0282295"/>
</dbReference>
<dbReference type="GeneID" id="8623517"/>
<dbReference type="KEGG" id="ddi:DDB_G0282295"/>
<dbReference type="dictyBase" id="DDB_G0282295">
    <property type="gene designation" value="ubqA"/>
</dbReference>
<dbReference type="VEuPathDB" id="AmoebaDB:DDB_G0282295"/>
<dbReference type="eggNOG" id="KOG0001">
    <property type="taxonomic scope" value="Eukaryota"/>
</dbReference>
<dbReference type="HOGENOM" id="CLU_010412_7_0_1"/>
<dbReference type="InParanoid" id="P0CG76"/>
<dbReference type="OMA" id="VHENTRR"/>
<dbReference type="PhylomeDB" id="P0CG76"/>
<dbReference type="Reactome" id="R-DDI-1169408">
    <property type="pathway name" value="ISG15 antiviral mechanism"/>
</dbReference>
<dbReference type="Reactome" id="R-DDI-936440">
    <property type="pathway name" value="Negative regulators of DDX58/IFIH1 signaling"/>
</dbReference>
<dbReference type="Reactome" id="R-DDI-9909505">
    <property type="pathway name" value="Modulation of host responses by IFN-stimulated genes"/>
</dbReference>
<dbReference type="PRO" id="PR:P0CG76"/>
<dbReference type="Proteomes" id="UP000002195">
    <property type="component" value="Chromosome 3"/>
</dbReference>
<dbReference type="GO" id="GO:0005737">
    <property type="term" value="C:cytoplasm"/>
    <property type="evidence" value="ECO:0000318"/>
    <property type="project" value="GO_Central"/>
</dbReference>
<dbReference type="GO" id="GO:0005634">
    <property type="term" value="C:nucleus"/>
    <property type="evidence" value="ECO:0000318"/>
    <property type="project" value="GO_Central"/>
</dbReference>
<dbReference type="GO" id="GO:0031386">
    <property type="term" value="F:protein tag activity"/>
    <property type="evidence" value="ECO:0000318"/>
    <property type="project" value="GO_Central"/>
</dbReference>
<dbReference type="GO" id="GO:0031625">
    <property type="term" value="F:ubiquitin protein ligase binding"/>
    <property type="evidence" value="ECO:0000318"/>
    <property type="project" value="GO_Central"/>
</dbReference>
<dbReference type="GO" id="GO:0019941">
    <property type="term" value="P:modification-dependent protein catabolic process"/>
    <property type="evidence" value="ECO:0000318"/>
    <property type="project" value="GO_Central"/>
</dbReference>
<dbReference type="GO" id="GO:0016567">
    <property type="term" value="P:protein ubiquitination"/>
    <property type="evidence" value="ECO:0000318"/>
    <property type="project" value="GO_Central"/>
</dbReference>
<dbReference type="CDD" id="cd01803">
    <property type="entry name" value="Ubl_ubiquitin"/>
    <property type="match status" value="5"/>
</dbReference>
<dbReference type="FunFam" id="3.10.20.90:FF:000158">
    <property type="entry name" value="Polyubiquitin 5"/>
    <property type="match status" value="3"/>
</dbReference>
<dbReference type="FunFam" id="3.10.20.90:FF:000014">
    <property type="entry name" value="Ubiquitin-60S ribosomal L40 fusion"/>
    <property type="match status" value="2"/>
</dbReference>
<dbReference type="Gene3D" id="3.10.20.90">
    <property type="entry name" value="Phosphatidylinositol 3-kinase Catalytic Subunit, Chain A, domain 1"/>
    <property type="match status" value="5"/>
</dbReference>
<dbReference type="InterPro" id="IPR000626">
    <property type="entry name" value="Ubiquitin-like_dom"/>
</dbReference>
<dbReference type="InterPro" id="IPR029071">
    <property type="entry name" value="Ubiquitin-like_domsf"/>
</dbReference>
<dbReference type="InterPro" id="IPR019954">
    <property type="entry name" value="Ubiquitin_CS"/>
</dbReference>
<dbReference type="InterPro" id="IPR019956">
    <property type="entry name" value="Ubiquitin_dom"/>
</dbReference>
<dbReference type="InterPro" id="IPR050158">
    <property type="entry name" value="Ubiquitin_ubiquitin-like"/>
</dbReference>
<dbReference type="PANTHER" id="PTHR10666">
    <property type="entry name" value="UBIQUITIN"/>
    <property type="match status" value="1"/>
</dbReference>
<dbReference type="Pfam" id="PF00240">
    <property type="entry name" value="ubiquitin"/>
    <property type="match status" value="5"/>
</dbReference>
<dbReference type="PRINTS" id="PR00348">
    <property type="entry name" value="UBIQUITIN"/>
</dbReference>
<dbReference type="SMART" id="SM00213">
    <property type="entry name" value="UBQ"/>
    <property type="match status" value="5"/>
</dbReference>
<dbReference type="SUPFAM" id="SSF54236">
    <property type="entry name" value="Ubiquitin-like"/>
    <property type="match status" value="5"/>
</dbReference>
<dbReference type="PROSITE" id="PS00299">
    <property type="entry name" value="UBIQUITIN_1"/>
    <property type="match status" value="5"/>
</dbReference>
<dbReference type="PROSITE" id="PS50053">
    <property type="entry name" value="UBIQUITIN_2"/>
    <property type="match status" value="5"/>
</dbReference>
<protein>
    <recommendedName>
        <fullName>Polyubiquitin-A</fullName>
    </recommendedName>
    <component>
        <recommendedName>
            <fullName>Ubiquitin</fullName>
        </recommendedName>
    </component>
    <component>
        <recommendedName>
            <fullName>Ubiquitin-related 1</fullName>
        </recommendedName>
    </component>
</protein>